<accession>Q9Y5F7</accession>
<accession>Q495T2</accession>
<accession>Q9Y5C3</accession>
<sequence length="938" mass="101214">MLRKVRSWTEIWRWATLLFLFYHLGYVCGQIRYPVPEESQEGTFVGNVAQDFLLDTDSLSARRLQVAGEVNQRHFRVDLDSGALLIKNPIDREALCGLSASCIVPLEFVTEGPLEMYRAEVEIVDVNDHAPRFPRQQLDLEIGEAAPPGQRFPLEKAQDADVGSNSISSYRLSSNEHFALDVKKRSDGSLVPELLLEKPLDREKQSDYRLVLTAVDGGNPPRSGTAELRVSVLDVNDNAPAFQQSSYRISVLESAPAGMVLIQLNASDPDLGPSGNVTFYFSGHTPDRVRNLFSLHPTTGKLTLLGPLDFESENYYEFDVRARDGGSPAMEQHCSLRVDLLDVNDNAPYITVTSELGTLPESAEPGTVVALISVQDPDSGSNGDVSLRIPDHLPFALKSAFRNQFSLVTAGPLDREAKSSYDIMVTASDAGNPPLSTHRTIFLNISDVNDNPPSFFQRSHEVFVPENNRPGDLLCSLAASDPDSGLNALISYSLLEPRNRDVSASSFISLNPQTGAVHATRSFDYEQTQTLQFEVQARDRGNPPLSSTVTVRLFVLDLNDNAPAVLRPRARPGSLCPQALPPSVGAGHLITKVTAVDLDSGYNAWVSYQLLEAPDPSLFAVSRYAGEVRTAVPIPADLPPQKLVIVVKDSGSPPLSTSVTLLVSLEEDTHPVVPDLRESSAPREGESRLTLYLAVSLVAICFVSFGSFVALLSKCLRGAACGVTCFPAGTCACLTRSRRREGLPPSNGILRIQLGSDDPIKFVDVGGHSHGCTPLASAPTRSDSFMMVKSPSAPMAGEPVRPSCPPSDLLYGLEQAPPNTDWRFSQAQRPGTSGSQNGDDTGTWPNNQFDTEMLQAMILASASEAADGSSTLGGGAGTMGLSARYGPQFTLQHVPDYRQNVYIPGSNATLTNAAGKRDGKAPAGGNGNKKKSGKKEKK</sequence>
<dbReference type="EMBL" id="AF152338">
    <property type="protein sequence ID" value="AAD43732.1"/>
    <property type="molecule type" value="mRNA"/>
</dbReference>
<dbReference type="EMBL" id="AF152525">
    <property type="protein sequence ID" value="AAD43785.1"/>
    <property type="molecule type" value="mRNA"/>
</dbReference>
<dbReference type="EMBL" id="CH471062">
    <property type="protein sequence ID" value="EAW61946.1"/>
    <property type="molecule type" value="Genomic_DNA"/>
</dbReference>
<dbReference type="EMBL" id="BC101035">
    <property type="protein sequence ID" value="AAI01036.1"/>
    <property type="molecule type" value="mRNA"/>
</dbReference>
<dbReference type="EMBL" id="BC101038">
    <property type="protein sequence ID" value="AAI01039.1"/>
    <property type="molecule type" value="mRNA"/>
</dbReference>
<dbReference type="CCDS" id="CCDS4262.1">
    <molecule id="Q9Y5F7-1"/>
</dbReference>
<dbReference type="CCDS" id="CCDS75349.1">
    <molecule id="Q9Y5F7-2"/>
</dbReference>
<dbReference type="RefSeq" id="NP_061751.1">
    <molecule id="Q9Y5F7-1"/>
    <property type="nucleotide sequence ID" value="NM_018928.3"/>
</dbReference>
<dbReference type="RefSeq" id="NP_115782.1">
    <molecule id="Q9Y5F7-2"/>
    <property type="nucleotide sequence ID" value="NM_032406.1"/>
</dbReference>
<dbReference type="SMR" id="Q9Y5F7"/>
<dbReference type="BioGRID" id="121038">
    <property type="interactions" value="166"/>
</dbReference>
<dbReference type="FunCoup" id="Q9Y5F7">
    <property type="interactions" value="147"/>
</dbReference>
<dbReference type="IntAct" id="Q9Y5F7">
    <property type="interactions" value="72"/>
</dbReference>
<dbReference type="STRING" id="9606.ENSP00000306918"/>
<dbReference type="GlyCosmos" id="Q9Y5F7">
    <property type="glycosylation" value="3 sites, No reported glycans"/>
</dbReference>
<dbReference type="GlyGen" id="Q9Y5F7">
    <property type="glycosylation" value="3 sites"/>
</dbReference>
<dbReference type="iPTMnet" id="Q9Y5F7"/>
<dbReference type="PhosphoSitePlus" id="Q9Y5F7"/>
<dbReference type="BioMuta" id="PCDHGC4"/>
<dbReference type="DMDM" id="37999827"/>
<dbReference type="jPOST" id="Q9Y5F7"/>
<dbReference type="MassIVE" id="Q9Y5F7"/>
<dbReference type="PaxDb" id="9606-ENSP00000306918"/>
<dbReference type="PeptideAtlas" id="Q9Y5F7"/>
<dbReference type="ProteomicsDB" id="86355">
    <molecule id="Q9Y5F7-1"/>
</dbReference>
<dbReference type="ProteomicsDB" id="86356">
    <molecule id="Q9Y5F7-2"/>
</dbReference>
<dbReference type="Antibodypedia" id="35056">
    <property type="antibodies" value="122 antibodies from 18 providers"/>
</dbReference>
<dbReference type="DNASU" id="56098"/>
<dbReference type="Ensembl" id="ENST00000306593.2">
    <molecule id="Q9Y5F7-1"/>
    <property type="protein sequence ID" value="ENSP00000306918.1"/>
    <property type="gene ID" value="ENSG00000242419.6"/>
</dbReference>
<dbReference type="Ensembl" id="ENST00000617094.1">
    <molecule id="Q9Y5F7-2"/>
    <property type="protein sequence ID" value="ENSP00000483845.1"/>
    <property type="gene ID" value="ENSG00000242419.6"/>
</dbReference>
<dbReference type="GeneID" id="56098"/>
<dbReference type="KEGG" id="hsa:56098"/>
<dbReference type="MANE-Select" id="ENST00000306593.2">
    <property type="protein sequence ID" value="ENSP00000306918.1"/>
    <property type="RefSeq nucleotide sequence ID" value="NM_018928.3"/>
    <property type="RefSeq protein sequence ID" value="NP_061751.1"/>
</dbReference>
<dbReference type="UCSC" id="uc003lky.3">
    <molecule id="Q9Y5F7-1"/>
    <property type="organism name" value="human"/>
</dbReference>
<dbReference type="AGR" id="HGNC:8717"/>
<dbReference type="CTD" id="56098"/>
<dbReference type="DisGeNET" id="56098"/>
<dbReference type="GeneCards" id="PCDHGC4"/>
<dbReference type="HGNC" id="HGNC:8717">
    <property type="gene designation" value="PCDHGC4"/>
</dbReference>
<dbReference type="HPA" id="ENSG00000242419">
    <property type="expression patterns" value="Group enriched (brain, retina)"/>
</dbReference>
<dbReference type="MalaCards" id="PCDHGC4"/>
<dbReference type="MIM" id="604968">
    <property type="type" value="gene"/>
</dbReference>
<dbReference type="MIM" id="606305">
    <property type="type" value="gene"/>
</dbReference>
<dbReference type="MIM" id="619880">
    <property type="type" value="phenotype"/>
</dbReference>
<dbReference type="neXtProt" id="NX_Q9Y5F7"/>
<dbReference type="Orphanet" id="528084">
    <property type="disease" value="Non-specific syndromic intellectual disability"/>
</dbReference>
<dbReference type="PharmGKB" id="PA33065"/>
<dbReference type="VEuPathDB" id="HostDB:ENSG00000242419"/>
<dbReference type="eggNOG" id="KOG3594">
    <property type="taxonomic scope" value="Eukaryota"/>
</dbReference>
<dbReference type="GeneTree" id="ENSGT00940000162232"/>
<dbReference type="HOGENOM" id="CLU_006480_3_1_1"/>
<dbReference type="InParanoid" id="Q9Y5F7"/>
<dbReference type="OMA" id="SIFIIDQ"/>
<dbReference type="OrthoDB" id="6252479at2759"/>
<dbReference type="PAN-GO" id="Q9Y5F7">
    <property type="GO annotations" value="2 GO annotations based on evolutionary models"/>
</dbReference>
<dbReference type="PhylomeDB" id="Q9Y5F7"/>
<dbReference type="TreeFam" id="TF332299"/>
<dbReference type="PathwayCommons" id="Q9Y5F7"/>
<dbReference type="SignaLink" id="Q9Y5F7"/>
<dbReference type="SIGNOR" id="Q9Y5F7"/>
<dbReference type="BioGRID-ORCS" id="56098">
    <property type="hits" value="7 hits in 1089 CRISPR screens"/>
</dbReference>
<dbReference type="GenomeRNAi" id="56098"/>
<dbReference type="Pharos" id="Q9Y5F7">
    <property type="development level" value="Tdark"/>
</dbReference>
<dbReference type="PRO" id="PR:Q9Y5F7"/>
<dbReference type="Proteomes" id="UP000005640">
    <property type="component" value="Chromosome 5"/>
</dbReference>
<dbReference type="RNAct" id="Q9Y5F7">
    <property type="molecule type" value="protein"/>
</dbReference>
<dbReference type="Bgee" id="ENSG00000242419">
    <property type="expression patterns" value="Expressed in cortical plate and 98 other cell types or tissues"/>
</dbReference>
<dbReference type="ExpressionAtlas" id="Q9Y5F7">
    <property type="expression patterns" value="baseline and differential"/>
</dbReference>
<dbReference type="GO" id="GO:0005886">
    <property type="term" value="C:plasma membrane"/>
    <property type="evidence" value="ECO:0000318"/>
    <property type="project" value="GO_Central"/>
</dbReference>
<dbReference type="GO" id="GO:0005509">
    <property type="term" value="F:calcium ion binding"/>
    <property type="evidence" value="ECO:0007669"/>
    <property type="project" value="InterPro"/>
</dbReference>
<dbReference type="GO" id="GO:0007155">
    <property type="term" value="P:cell adhesion"/>
    <property type="evidence" value="ECO:0000318"/>
    <property type="project" value="GO_Central"/>
</dbReference>
<dbReference type="GO" id="GO:0007156">
    <property type="term" value="P:homophilic cell adhesion via plasma membrane adhesion molecules"/>
    <property type="evidence" value="ECO:0007669"/>
    <property type="project" value="InterPro"/>
</dbReference>
<dbReference type="GO" id="GO:0043524">
    <property type="term" value="P:negative regulation of neuron apoptotic process"/>
    <property type="evidence" value="ECO:0007669"/>
    <property type="project" value="Ensembl"/>
</dbReference>
<dbReference type="GO" id="GO:0007399">
    <property type="term" value="P:nervous system development"/>
    <property type="evidence" value="ECO:0007669"/>
    <property type="project" value="UniProtKB-ARBA"/>
</dbReference>
<dbReference type="GO" id="GO:0050808">
    <property type="term" value="P:synapse organization"/>
    <property type="evidence" value="ECO:0007669"/>
    <property type="project" value="Ensembl"/>
</dbReference>
<dbReference type="CDD" id="cd11304">
    <property type="entry name" value="Cadherin_repeat"/>
    <property type="match status" value="5"/>
</dbReference>
<dbReference type="FunFam" id="2.60.40.60:FF:000004">
    <property type="entry name" value="Protocadherin 1 gamma 2"/>
    <property type="match status" value="1"/>
</dbReference>
<dbReference type="FunFam" id="2.60.40.60:FF:000001">
    <property type="entry name" value="Protocadherin alpha 2"/>
    <property type="match status" value="1"/>
</dbReference>
<dbReference type="FunFam" id="2.60.40.60:FF:000002">
    <property type="entry name" value="Protocadherin alpha 2"/>
    <property type="match status" value="1"/>
</dbReference>
<dbReference type="FunFam" id="2.60.40.60:FF:000006">
    <property type="entry name" value="Protocadherin alpha 2"/>
    <property type="match status" value="1"/>
</dbReference>
<dbReference type="FunFam" id="2.60.40.60:FF:000007">
    <property type="entry name" value="Protocadherin alpha 2"/>
    <property type="match status" value="1"/>
</dbReference>
<dbReference type="FunFam" id="2.60.40.60:FF:000129">
    <property type="entry name" value="protocadherin alpha-C2 isoform X1"/>
    <property type="match status" value="1"/>
</dbReference>
<dbReference type="Gene3D" id="2.60.40.60">
    <property type="entry name" value="Cadherins"/>
    <property type="match status" value="6"/>
</dbReference>
<dbReference type="InterPro" id="IPR002126">
    <property type="entry name" value="Cadherin-like_dom"/>
</dbReference>
<dbReference type="InterPro" id="IPR015919">
    <property type="entry name" value="Cadherin-like_sf"/>
</dbReference>
<dbReference type="InterPro" id="IPR031904">
    <property type="entry name" value="Cadherin_CBD"/>
</dbReference>
<dbReference type="InterPro" id="IPR020894">
    <property type="entry name" value="Cadherin_CS"/>
</dbReference>
<dbReference type="InterPro" id="IPR013164">
    <property type="entry name" value="Cadherin_N"/>
</dbReference>
<dbReference type="InterPro" id="IPR050174">
    <property type="entry name" value="Protocadherin/Cadherin-CA"/>
</dbReference>
<dbReference type="PANTHER" id="PTHR24028">
    <property type="entry name" value="CADHERIN-87A"/>
    <property type="match status" value="1"/>
</dbReference>
<dbReference type="PANTHER" id="PTHR24028:SF272">
    <property type="entry name" value="PROTOCADHERIN GAMMA-C4"/>
    <property type="match status" value="1"/>
</dbReference>
<dbReference type="Pfam" id="PF00028">
    <property type="entry name" value="Cadherin"/>
    <property type="match status" value="5"/>
</dbReference>
<dbReference type="Pfam" id="PF08266">
    <property type="entry name" value="Cadherin_2"/>
    <property type="match status" value="1"/>
</dbReference>
<dbReference type="Pfam" id="PF15974">
    <property type="entry name" value="Cadherin_tail"/>
    <property type="match status" value="1"/>
</dbReference>
<dbReference type="PRINTS" id="PR00205">
    <property type="entry name" value="CADHERIN"/>
</dbReference>
<dbReference type="SMART" id="SM00112">
    <property type="entry name" value="CA"/>
    <property type="match status" value="6"/>
</dbReference>
<dbReference type="SUPFAM" id="SSF49313">
    <property type="entry name" value="Cadherin-like"/>
    <property type="match status" value="6"/>
</dbReference>
<dbReference type="PROSITE" id="PS00232">
    <property type="entry name" value="CADHERIN_1"/>
    <property type="match status" value="5"/>
</dbReference>
<dbReference type="PROSITE" id="PS50268">
    <property type="entry name" value="CADHERIN_2"/>
    <property type="match status" value="6"/>
</dbReference>
<evidence type="ECO:0000250" key="1"/>
<evidence type="ECO:0000255" key="2"/>
<evidence type="ECO:0000255" key="3">
    <source>
        <dbReference type="PROSITE-ProRule" id="PRU00043"/>
    </source>
</evidence>
<evidence type="ECO:0000256" key="4">
    <source>
        <dbReference type="SAM" id="MobiDB-lite"/>
    </source>
</evidence>
<evidence type="ECO:0000269" key="5">
    <source>
    </source>
</evidence>
<evidence type="ECO:0000303" key="6">
    <source>
    </source>
</evidence>
<evidence type="ECO:0000303" key="7">
    <source>
    </source>
</evidence>
<comment type="function">
    <text>Potential calcium-dependent cell-adhesion protein. May be involved in the establishment and maintenance of specific neuronal connections in the brain.</text>
</comment>
<comment type="subcellular location">
    <subcellularLocation>
        <location evidence="1">Cell membrane</location>
        <topology evidence="1">Single-pass type I membrane protein</topology>
    </subcellularLocation>
</comment>
<comment type="alternative products">
    <event type="alternative splicing"/>
    <isoform>
        <id>Q9Y5F7-1</id>
        <name>1</name>
        <sequence type="displayed"/>
    </isoform>
    <isoform>
        <id>Q9Y5F7-2</id>
        <name>2</name>
        <name>Short</name>
        <sequence type="described" ref="VSP_008700 VSP_008701"/>
    </isoform>
</comment>
<comment type="disease" evidence="5">
    <disease id="DI-06426">
        <name>Neurodevelopmental disorder with poor growth and skeletal anomalies</name>
        <acronym>NEDGS</acronym>
        <description>An autosomal recessive disorder characterized by global developmental delay and impaired intellectual development apparent from infancy. Affected individuals present with progressive microcephaly, hypotonia, delayed walking, poor or absent speech, intellectual disability, and variable skeletal anomalies. Variable features include seizures, non-specific dysmorphic facial features, oculomotor apraxia, and non-specific brain imaging abnormalities.</description>
        <dbReference type="MIM" id="619880"/>
    </disease>
    <text>The disease is caused by variants affecting the gene represented in this entry.</text>
</comment>
<protein>
    <recommendedName>
        <fullName>Protocadherin gamma-C4</fullName>
        <shortName>PCDH-gamma-C4</shortName>
    </recommendedName>
</protein>
<reference key="1">
    <citation type="journal article" date="1999" name="Cell">
        <title>A striking organization of a large family of human neural cadherin-like cell adhesion genes.</title>
        <authorList>
            <person name="Wu Q."/>
            <person name="Maniatis T."/>
        </authorList>
    </citation>
    <scope>NUCLEOTIDE SEQUENCE [MRNA] (ISOFORMS 1 AND 2)</scope>
    <source>
        <tissue>Brain</tissue>
    </source>
</reference>
<reference key="2">
    <citation type="submission" date="2005-09" db="EMBL/GenBank/DDBJ databases">
        <authorList>
            <person name="Mural R.J."/>
            <person name="Istrail S."/>
            <person name="Sutton G.G."/>
            <person name="Florea L."/>
            <person name="Halpern A.L."/>
            <person name="Mobarry C.M."/>
            <person name="Lippert R."/>
            <person name="Walenz B."/>
            <person name="Shatkay H."/>
            <person name="Dew I."/>
            <person name="Miller J.R."/>
            <person name="Flanigan M.J."/>
            <person name="Edwards N.J."/>
            <person name="Bolanos R."/>
            <person name="Fasulo D."/>
            <person name="Halldorsson B.V."/>
            <person name="Hannenhalli S."/>
            <person name="Turner R."/>
            <person name="Yooseph S."/>
            <person name="Lu F."/>
            <person name="Nusskern D.R."/>
            <person name="Shue B.C."/>
            <person name="Zheng X.H."/>
            <person name="Zhong F."/>
            <person name="Delcher A.L."/>
            <person name="Huson D.H."/>
            <person name="Kravitz S.A."/>
            <person name="Mouchard L."/>
            <person name="Reinert K."/>
            <person name="Remington K.A."/>
            <person name="Clark A.G."/>
            <person name="Waterman M.S."/>
            <person name="Eichler E.E."/>
            <person name="Adams M.D."/>
            <person name="Hunkapiller M.W."/>
            <person name="Myers E.W."/>
            <person name="Venter J.C."/>
        </authorList>
    </citation>
    <scope>NUCLEOTIDE SEQUENCE [LARGE SCALE GENOMIC DNA]</scope>
</reference>
<reference key="3">
    <citation type="journal article" date="2004" name="Genome Res.">
        <title>The status, quality, and expansion of the NIH full-length cDNA project: the Mammalian Gene Collection (MGC).</title>
        <authorList>
            <consortium name="The MGC Project Team"/>
        </authorList>
    </citation>
    <scope>NUCLEOTIDE SEQUENCE [LARGE SCALE MRNA] (ISOFORM 2)</scope>
</reference>
<reference key="4">
    <citation type="journal article" date="2021" name="Genet. Med.">
        <title>Biallelic variants in PCDHGC4 cause a novel neurodevelopmental syndrome with progressive microcephaly, seizures, and joint anomalies.</title>
        <authorList>
            <consortium name="Genomics England Research Consortium"/>
            <person name="Iqbal M."/>
            <person name="Maroofian R."/>
            <person name="Cavdarli B."/>
            <person name="Riccardi F."/>
            <person name="Field M."/>
            <person name="Banka S."/>
            <person name="Bubshait D.K."/>
            <person name="Li Y."/>
            <person name="Hertecant J."/>
            <person name="Baig S.M."/>
            <person name="Dyment D."/>
            <person name="Efthymiou S."/>
            <person name="Abdullah U."/>
            <person name="Makhdoom E.U.H."/>
            <person name="Ali Z."/>
            <person name="Scherf de Almeida T."/>
            <person name="Molinari F."/>
            <person name="Mignon-Ravix C."/>
            <person name="Chabrol B."/>
            <person name="Antony J."/>
            <person name="Ades L."/>
            <person name="Pagnamenta A.T."/>
            <person name="Jackson A."/>
            <person name="Douzgou S."/>
            <person name="Beetz C."/>
            <person name="Karageorgou V."/>
            <person name="Vona B."/>
            <person name="Rad A."/>
            <person name="Baig J.M."/>
            <person name="Sultan T."/>
            <person name="Alvi J.R."/>
            <person name="Maqbool S."/>
            <person name="Rahman F."/>
            <person name="Toosi M.B."/>
            <person name="Ashrafzadeh F."/>
            <person name="Imannezhad S."/>
            <person name="Karimiani E.G."/>
            <person name="Sarwar Y."/>
            <person name="Khan S."/>
            <person name="Jameel M."/>
            <person name="Noegel A.A."/>
            <person name="Budde B."/>
            <person name="Altmueller J."/>
            <person name="Motameny S."/>
            <person name="Hoehne W."/>
            <person name="Houlden H."/>
            <person name="Nuernberg P."/>
            <person name="Wollnik B."/>
            <person name="Villard L."/>
            <person name="Alkuraya F.S."/>
            <person name="Osmond M."/>
            <person name="Hussain M.S."/>
            <person name="Yigit G."/>
        </authorList>
    </citation>
    <scope>VARIANTS NEDGS 40-GLN--LYS-938 DEL; 415-ARG--LYS-938 DEL; GLU-483; VAL-488 AND GLY-606</scope>
    <scope>INVOLVEMENT IN NEDGS</scope>
</reference>
<organism>
    <name type="scientific">Homo sapiens</name>
    <name type="common">Human</name>
    <dbReference type="NCBI Taxonomy" id="9606"/>
    <lineage>
        <taxon>Eukaryota</taxon>
        <taxon>Metazoa</taxon>
        <taxon>Chordata</taxon>
        <taxon>Craniata</taxon>
        <taxon>Vertebrata</taxon>
        <taxon>Euteleostomi</taxon>
        <taxon>Mammalia</taxon>
        <taxon>Eutheria</taxon>
        <taxon>Euarchontoglires</taxon>
        <taxon>Primates</taxon>
        <taxon>Haplorrhini</taxon>
        <taxon>Catarrhini</taxon>
        <taxon>Hominidae</taxon>
        <taxon>Homo</taxon>
    </lineage>
</organism>
<keyword id="KW-0025">Alternative splicing</keyword>
<keyword id="KW-0106">Calcium</keyword>
<keyword id="KW-0130">Cell adhesion</keyword>
<keyword id="KW-1003">Cell membrane</keyword>
<keyword id="KW-0225">Disease variant</keyword>
<keyword id="KW-0325">Glycoprotein</keyword>
<keyword id="KW-0991">Intellectual disability</keyword>
<keyword id="KW-0472">Membrane</keyword>
<keyword id="KW-1267">Proteomics identification</keyword>
<keyword id="KW-1185">Reference proteome</keyword>
<keyword id="KW-0677">Repeat</keyword>
<keyword id="KW-0732">Signal</keyword>
<keyword id="KW-0812">Transmembrane</keyword>
<keyword id="KW-1133">Transmembrane helix</keyword>
<feature type="signal peptide" evidence="2">
    <location>
        <begin position="1"/>
        <end position="29"/>
    </location>
</feature>
<feature type="chain" id="PRO_0000003987" description="Protocadherin gamma-C4">
    <location>
        <begin position="30"/>
        <end position="938"/>
    </location>
</feature>
<feature type="topological domain" description="Extracellular" evidence="2">
    <location>
        <begin position="30"/>
        <end position="692"/>
    </location>
</feature>
<feature type="transmembrane region" description="Helical" evidence="2">
    <location>
        <begin position="693"/>
        <end position="713"/>
    </location>
</feature>
<feature type="topological domain" description="Cytoplasmic" evidence="2">
    <location>
        <begin position="714"/>
        <end position="938"/>
    </location>
</feature>
<feature type="domain" description="Cadherin 1" evidence="3">
    <location>
        <begin position="30"/>
        <end position="133"/>
    </location>
</feature>
<feature type="domain" description="Cadherin 2" evidence="3">
    <location>
        <begin position="134"/>
        <end position="242"/>
    </location>
</feature>
<feature type="domain" description="Cadherin 3" evidence="3">
    <location>
        <begin position="243"/>
        <end position="350"/>
    </location>
</feature>
<feature type="domain" description="Cadherin 4" evidence="3">
    <location>
        <begin position="351"/>
        <end position="455"/>
    </location>
</feature>
<feature type="domain" description="Cadherin 5" evidence="3">
    <location>
        <begin position="456"/>
        <end position="565"/>
    </location>
</feature>
<feature type="domain" description="Cadherin 6" evidence="3">
    <location>
        <begin position="572"/>
        <end position="676"/>
    </location>
</feature>
<feature type="region of interest" description="Disordered" evidence="4">
    <location>
        <begin position="791"/>
        <end position="847"/>
    </location>
</feature>
<feature type="region of interest" description="Disordered" evidence="4">
    <location>
        <begin position="908"/>
        <end position="938"/>
    </location>
</feature>
<feature type="compositionally biased region" description="Polar residues" evidence="4">
    <location>
        <begin position="822"/>
        <end position="847"/>
    </location>
</feature>
<feature type="compositionally biased region" description="Basic residues" evidence="4">
    <location>
        <begin position="928"/>
        <end position="938"/>
    </location>
</feature>
<feature type="glycosylation site" description="N-linked (GlcNAc...) asparagine" evidence="2">
    <location>
        <position position="265"/>
    </location>
</feature>
<feature type="glycosylation site" description="N-linked (GlcNAc...) asparagine" evidence="2">
    <location>
        <position position="276"/>
    </location>
</feature>
<feature type="glycosylation site" description="N-linked (GlcNAc...) asparagine" evidence="2">
    <location>
        <position position="444"/>
    </location>
</feature>
<feature type="splice variant" id="VSP_008700" description="In isoform 2." evidence="6 7">
    <original>QAPPNTDWRFSQAQRPGTSGSQNGDDTGTWPNNQFDTEMLQAMILASASEAADGSST</original>
    <variation>VRPLQAQQMLEGYSDPGIWLGHVLESTGLSVSAHSDVTIFVRGNYVVDAVLCNCFVN</variation>
    <location>
        <begin position="815"/>
        <end position="871"/>
    </location>
</feature>
<feature type="splice variant" id="VSP_008701" description="In isoform 2." evidence="6 7">
    <location>
        <begin position="872"/>
        <end position="938"/>
    </location>
</feature>
<feature type="sequence variant" id="VAR_087337" description="In NEDGS." evidence="5">
    <location>
        <begin position="40"/>
        <end position="938"/>
    </location>
</feature>
<feature type="sequence variant" id="VAR_087338" description="In NEDGS." evidence="5">
    <location>
        <begin position="415"/>
        <end position="938"/>
    </location>
</feature>
<feature type="sequence variant" id="VAR_087339" description="In NEDGS; uncertain significance; dbSNP:rs1320329216." evidence="5">
    <original>D</original>
    <variation>E</variation>
    <location>
        <position position="483"/>
    </location>
</feature>
<feature type="sequence variant" id="VAR_087340" description="In NEDGS; uncertain significance; dbSNP:rs775104626." evidence="5">
    <original>A</original>
    <variation>V</variation>
    <location>
        <position position="488"/>
    </location>
</feature>
<feature type="sequence variant" id="VAR_087341" description="In NEDGS; uncertain significance." evidence="5">
    <original>V</original>
    <variation>G</variation>
    <location>
        <position position="606"/>
    </location>
</feature>
<gene>
    <name type="primary">PCDHGC4</name>
</gene>
<proteinExistence type="evidence at protein level"/>
<name>PCDGL_HUMAN</name>